<comment type="function">
    <text evidence="1">Endonuclease IV plays a role in DNA repair. It cleaves phosphodiester bonds at apurinic or apyrimidinic (AP) sites, generating a 3'-hydroxyl group and a 5'-terminal sugar phosphate.</text>
</comment>
<comment type="catalytic activity">
    <reaction evidence="1">
        <text>Endonucleolytic cleavage to 5'-phosphooligonucleotide end-products.</text>
        <dbReference type="EC" id="3.1.21.2"/>
    </reaction>
</comment>
<comment type="cofactor">
    <cofactor evidence="1">
        <name>Zn(2+)</name>
        <dbReference type="ChEBI" id="CHEBI:29105"/>
    </cofactor>
    <text evidence="1">Binds 3 Zn(2+) ions.</text>
</comment>
<comment type="similarity">
    <text evidence="1">Belongs to the AP endonuclease 2 family.</text>
</comment>
<sequence length="282" mass="31920">MIRIGAHMPIGGGFKRVPKETYEIGGNAFQIFPHNPRQWKANLPKEEDIKLFKEGIKKYKIDPEAMLCHSGYLINIASPNIETWNKSLELLILEMKICSTLGIKYLNIHPGSHLKSGVENGINQILKALNTAMEKEKNTFILLENVTKKGGNIGSTLEELKLIIDKAKFPDRLGITIDTCHAFDAGYDITNKEKLNEFLNKIDKYFSLEKLKFIHLNDSKNDLGSNKDRHENIGKGKIGSEGLKVFISHPLIQKIPWVLETPGDNDVHKKDIQEVLKILEVK</sequence>
<dbReference type="EC" id="3.1.21.2" evidence="1"/>
<dbReference type="EMBL" id="CP001185">
    <property type="protein sequence ID" value="ACJ76154.1"/>
    <property type="molecule type" value="Genomic_DNA"/>
</dbReference>
<dbReference type="RefSeq" id="WP_004102582.1">
    <property type="nucleotide sequence ID" value="NC_011653.1"/>
</dbReference>
<dbReference type="SMR" id="B7IDS7"/>
<dbReference type="STRING" id="484019.THA_1718"/>
<dbReference type="KEGG" id="taf:THA_1718"/>
<dbReference type="eggNOG" id="COG0648">
    <property type="taxonomic scope" value="Bacteria"/>
</dbReference>
<dbReference type="HOGENOM" id="CLU_025885_0_1_0"/>
<dbReference type="OrthoDB" id="9805666at2"/>
<dbReference type="Proteomes" id="UP000002453">
    <property type="component" value="Chromosome"/>
</dbReference>
<dbReference type="GO" id="GO:0008833">
    <property type="term" value="F:deoxyribonuclease IV (phage-T4-induced) activity"/>
    <property type="evidence" value="ECO:0007669"/>
    <property type="project" value="UniProtKB-UniRule"/>
</dbReference>
<dbReference type="GO" id="GO:0003677">
    <property type="term" value="F:DNA binding"/>
    <property type="evidence" value="ECO:0007669"/>
    <property type="project" value="InterPro"/>
</dbReference>
<dbReference type="GO" id="GO:0003906">
    <property type="term" value="F:DNA-(apurinic or apyrimidinic site) endonuclease activity"/>
    <property type="evidence" value="ECO:0007669"/>
    <property type="project" value="TreeGrafter"/>
</dbReference>
<dbReference type="GO" id="GO:0008081">
    <property type="term" value="F:phosphoric diester hydrolase activity"/>
    <property type="evidence" value="ECO:0007669"/>
    <property type="project" value="TreeGrafter"/>
</dbReference>
<dbReference type="GO" id="GO:0008270">
    <property type="term" value="F:zinc ion binding"/>
    <property type="evidence" value="ECO:0007669"/>
    <property type="project" value="UniProtKB-UniRule"/>
</dbReference>
<dbReference type="GO" id="GO:0006284">
    <property type="term" value="P:base-excision repair"/>
    <property type="evidence" value="ECO:0007669"/>
    <property type="project" value="TreeGrafter"/>
</dbReference>
<dbReference type="CDD" id="cd00019">
    <property type="entry name" value="AP2Ec"/>
    <property type="match status" value="1"/>
</dbReference>
<dbReference type="FunFam" id="3.20.20.150:FF:000001">
    <property type="entry name" value="Probable endonuclease 4"/>
    <property type="match status" value="1"/>
</dbReference>
<dbReference type="Gene3D" id="3.20.20.150">
    <property type="entry name" value="Divalent-metal-dependent TIM barrel enzymes"/>
    <property type="match status" value="1"/>
</dbReference>
<dbReference type="HAMAP" id="MF_00152">
    <property type="entry name" value="Nfo"/>
    <property type="match status" value="1"/>
</dbReference>
<dbReference type="InterPro" id="IPR001719">
    <property type="entry name" value="AP_endonuc_2"/>
</dbReference>
<dbReference type="InterPro" id="IPR018246">
    <property type="entry name" value="AP_endonuc_F2_Zn_BS"/>
</dbReference>
<dbReference type="InterPro" id="IPR036237">
    <property type="entry name" value="Xyl_isomerase-like_sf"/>
</dbReference>
<dbReference type="InterPro" id="IPR013022">
    <property type="entry name" value="Xyl_isomerase-like_TIM-brl"/>
</dbReference>
<dbReference type="NCBIfam" id="TIGR00587">
    <property type="entry name" value="nfo"/>
    <property type="match status" value="1"/>
</dbReference>
<dbReference type="PANTHER" id="PTHR21445:SF0">
    <property type="entry name" value="APURINIC-APYRIMIDINIC ENDONUCLEASE"/>
    <property type="match status" value="1"/>
</dbReference>
<dbReference type="PANTHER" id="PTHR21445">
    <property type="entry name" value="ENDONUCLEASE IV ENDODEOXYRIBONUCLEASE IV"/>
    <property type="match status" value="1"/>
</dbReference>
<dbReference type="Pfam" id="PF01261">
    <property type="entry name" value="AP_endonuc_2"/>
    <property type="match status" value="1"/>
</dbReference>
<dbReference type="SMART" id="SM00518">
    <property type="entry name" value="AP2Ec"/>
    <property type="match status" value="1"/>
</dbReference>
<dbReference type="SUPFAM" id="SSF51658">
    <property type="entry name" value="Xylose isomerase-like"/>
    <property type="match status" value="1"/>
</dbReference>
<dbReference type="PROSITE" id="PS00729">
    <property type="entry name" value="AP_NUCLEASE_F2_1"/>
    <property type="match status" value="1"/>
</dbReference>
<dbReference type="PROSITE" id="PS00730">
    <property type="entry name" value="AP_NUCLEASE_F2_2"/>
    <property type="match status" value="1"/>
</dbReference>
<dbReference type="PROSITE" id="PS00731">
    <property type="entry name" value="AP_NUCLEASE_F2_3"/>
    <property type="match status" value="1"/>
</dbReference>
<dbReference type="PROSITE" id="PS51432">
    <property type="entry name" value="AP_NUCLEASE_F2_4"/>
    <property type="match status" value="1"/>
</dbReference>
<reference key="1">
    <citation type="journal article" date="2009" name="J. Bacteriol.">
        <title>The genome of Thermosipho africanus TCF52B: lateral genetic connections to the Firmicutes and Archaea.</title>
        <authorList>
            <person name="Nesboe C.L."/>
            <person name="Bapteste E."/>
            <person name="Curtis B."/>
            <person name="Dahle H."/>
            <person name="Lopez P."/>
            <person name="Macleod D."/>
            <person name="Dlutek M."/>
            <person name="Bowman S."/>
            <person name="Zhaxybayeva O."/>
            <person name="Birkeland N.-K."/>
            <person name="Doolittle W.F."/>
        </authorList>
    </citation>
    <scope>NUCLEOTIDE SEQUENCE [LARGE SCALE GENOMIC DNA]</scope>
    <source>
        <strain>TCF52B</strain>
    </source>
</reference>
<keyword id="KW-0227">DNA damage</keyword>
<keyword id="KW-0234">DNA repair</keyword>
<keyword id="KW-0255">Endonuclease</keyword>
<keyword id="KW-0378">Hydrolase</keyword>
<keyword id="KW-0479">Metal-binding</keyword>
<keyword id="KW-0540">Nuclease</keyword>
<keyword id="KW-1185">Reference proteome</keyword>
<keyword id="KW-0862">Zinc</keyword>
<feature type="chain" id="PRO_1000118101" description="Probable endonuclease 4">
    <location>
        <begin position="1"/>
        <end position="282"/>
    </location>
</feature>
<feature type="binding site" evidence="1">
    <location>
        <position position="69"/>
    </location>
    <ligand>
        <name>Zn(2+)</name>
        <dbReference type="ChEBI" id="CHEBI:29105"/>
        <label>1</label>
    </ligand>
</feature>
<feature type="binding site" evidence="1">
    <location>
        <position position="109"/>
    </location>
    <ligand>
        <name>Zn(2+)</name>
        <dbReference type="ChEBI" id="CHEBI:29105"/>
        <label>1</label>
    </ligand>
</feature>
<feature type="binding site" evidence="1">
    <location>
        <position position="144"/>
    </location>
    <ligand>
        <name>Zn(2+)</name>
        <dbReference type="ChEBI" id="CHEBI:29105"/>
        <label>1</label>
    </ligand>
</feature>
<feature type="binding site" evidence="1">
    <location>
        <position position="144"/>
    </location>
    <ligand>
        <name>Zn(2+)</name>
        <dbReference type="ChEBI" id="CHEBI:29105"/>
        <label>2</label>
    </ligand>
</feature>
<feature type="binding site" evidence="1">
    <location>
        <position position="178"/>
    </location>
    <ligand>
        <name>Zn(2+)</name>
        <dbReference type="ChEBI" id="CHEBI:29105"/>
        <label>2</label>
    </ligand>
</feature>
<feature type="binding site" evidence="1">
    <location>
        <position position="181"/>
    </location>
    <ligand>
        <name>Zn(2+)</name>
        <dbReference type="ChEBI" id="CHEBI:29105"/>
        <label>3</label>
    </ligand>
</feature>
<feature type="binding site" evidence="1">
    <location>
        <position position="215"/>
    </location>
    <ligand>
        <name>Zn(2+)</name>
        <dbReference type="ChEBI" id="CHEBI:29105"/>
        <label>2</label>
    </ligand>
</feature>
<feature type="binding site" evidence="1">
    <location>
        <position position="228"/>
    </location>
    <ligand>
        <name>Zn(2+)</name>
        <dbReference type="ChEBI" id="CHEBI:29105"/>
        <label>3</label>
    </ligand>
</feature>
<feature type="binding site" evidence="1">
    <location>
        <position position="230"/>
    </location>
    <ligand>
        <name>Zn(2+)</name>
        <dbReference type="ChEBI" id="CHEBI:29105"/>
        <label>3</label>
    </ligand>
</feature>
<feature type="binding site" evidence="1">
    <location>
        <position position="260"/>
    </location>
    <ligand>
        <name>Zn(2+)</name>
        <dbReference type="ChEBI" id="CHEBI:29105"/>
        <label>2</label>
    </ligand>
</feature>
<organism>
    <name type="scientific">Thermosipho africanus (strain TCF52B)</name>
    <dbReference type="NCBI Taxonomy" id="484019"/>
    <lineage>
        <taxon>Bacteria</taxon>
        <taxon>Thermotogati</taxon>
        <taxon>Thermotogota</taxon>
        <taxon>Thermotogae</taxon>
        <taxon>Thermotogales</taxon>
        <taxon>Fervidobacteriaceae</taxon>
        <taxon>Thermosipho</taxon>
    </lineage>
</organism>
<gene>
    <name evidence="1" type="primary">nfo</name>
    <name type="ordered locus">THA_1718</name>
</gene>
<proteinExistence type="inferred from homology"/>
<name>END4_THEAB</name>
<accession>B7IDS7</accession>
<evidence type="ECO:0000255" key="1">
    <source>
        <dbReference type="HAMAP-Rule" id="MF_00152"/>
    </source>
</evidence>
<protein>
    <recommendedName>
        <fullName evidence="1">Probable endonuclease 4</fullName>
        <ecNumber evidence="1">3.1.21.2</ecNumber>
    </recommendedName>
    <alternativeName>
        <fullName evidence="1">Endodeoxyribonuclease IV</fullName>
    </alternativeName>
    <alternativeName>
        <fullName evidence="1">Endonuclease IV</fullName>
    </alternativeName>
</protein>